<protein>
    <recommendedName>
        <fullName>77 kDa echinoderm microtubule-associated protein</fullName>
    </recommendedName>
</protein>
<accession>Q9Y1C1</accession>
<gene>
    <name type="primary">EMAP</name>
</gene>
<reference key="1">
    <citation type="journal article" date="2000" name="Dev. Genes Evol.">
        <title>Conservation of the WD-repeat, microtubule-binding protein, EMAP, in sea urchins, humans, and the nematode C. elegans.</title>
        <authorList>
            <person name="Suprenant K.A."/>
            <person name="Tuxhorn J.A."/>
            <person name="Daggett M.A.F."/>
            <person name="Ahrens D.P."/>
            <person name="Hostetler A."/>
            <person name="Palange J.M."/>
            <person name="VanWinkle C.E."/>
            <person name="Livingston B.T."/>
        </authorList>
    </citation>
    <scope>NUCLEOTIDE SEQUENCE [MRNA]</scope>
</reference>
<feature type="chain" id="PRO_0000050965" description="77 kDa echinoderm microtubule-associated protein">
    <location>
        <begin position="1" status="less than"/>
        <end position="664"/>
    </location>
</feature>
<feature type="repeat" description="WD 1">
    <location>
        <begin position="120"/>
        <end position="167"/>
    </location>
</feature>
<feature type="repeat" description="WD 2">
    <location>
        <begin position="172"/>
        <end position="215"/>
    </location>
</feature>
<feature type="repeat" description="WD 3">
    <location>
        <begin position="218"/>
        <end position="257"/>
    </location>
</feature>
<feature type="repeat" description="WD 4">
    <location>
        <begin position="265"/>
        <end position="303"/>
    </location>
</feature>
<feature type="repeat" description="WD 5">
    <location>
        <begin position="307"/>
        <end position="346"/>
    </location>
</feature>
<feature type="repeat" description="WD 6">
    <location>
        <begin position="390"/>
        <end position="429"/>
    </location>
</feature>
<feature type="repeat" description="WD 7">
    <location>
        <begin position="473"/>
        <end position="512"/>
    </location>
</feature>
<feature type="repeat" description="WD 8">
    <location>
        <begin position="519"/>
        <end position="558"/>
    </location>
</feature>
<feature type="repeat" description="WD 9">
    <location>
        <begin position="631"/>
        <end position="663"/>
    </location>
</feature>
<feature type="region of interest" description="Disordered" evidence="1">
    <location>
        <begin position="1"/>
        <end position="31"/>
    </location>
</feature>
<feature type="non-terminal residue">
    <location>
        <position position="1"/>
    </location>
</feature>
<sequence>DGRPRTSPRGGSASGKRFQKEPQHNAASHSTYNQEEGYVRIYLRGRPVTNYLPSDVEDYDINAKHPAPTEKLKLDWVYGYRGRDCRCNLYLLPTGEIVYFMAAVVILYNVEEQNQRHYMGHNDDVKSIAVHPDSVTIATGQVAGHDAAEGKPHVRIWSSITLETLHVIGLGFFDRAVCSLSFSKVNVGVNLAAVDESNEHVLSLWDWKKEKKICDTKSSQDPVLACEFHPMNDEQIITLGKGHIHFWNTAGGKLVKKSGIFEKYDKPKFMLSLAFTGNGDVITGDSNGNMYIWGKGNTRISQAVLGAHEGGIFSLCVMNDGQILSGGGKDKKVVLWTADYQQSETTQVPEATGPVRTLCKGKGENFYVGTTRNAILSGDMGGDFTTLVQAHTEELWGLALHPTQGMFLTCGYDKNVILWDFEQHTQRWNKFMEDGCQSAGFHPSGEVVAIGMTSGRWVALDVESGDLYTVHTDGKEQHDIIRYSPNGEYLAVASHDNYIYIYSVKETGRKYSKVGRCSGHSSFVTHIDWSADSTKLQSNSGDYELLFWDAETCKQIVGSKETRDIEWATFTGVLGYPVCGIWPEGSDGTDVNTTARSGNGNILATGDDFGKISLFRYPVNHPKADCNSFKGHSSHVTSVAFNEDSTKLISTGGRDMSCMQWSVV</sequence>
<proteinExistence type="evidence at transcript level"/>
<keyword id="KW-0963">Cytoplasm</keyword>
<keyword id="KW-0206">Cytoskeleton</keyword>
<keyword id="KW-0493">Microtubule</keyword>
<keyword id="KW-0677">Repeat</keyword>
<keyword id="KW-0853">WD repeat</keyword>
<evidence type="ECO:0000256" key="1">
    <source>
        <dbReference type="SAM" id="MobiDB-lite"/>
    </source>
</evidence>
<evidence type="ECO:0000305" key="2"/>
<dbReference type="EMBL" id="AF136234">
    <property type="protein sequence ID" value="AAD44709.1"/>
    <property type="molecule type" value="mRNA"/>
</dbReference>
<dbReference type="SMR" id="Q9Y1C1"/>
<dbReference type="OrthoDB" id="47802at2759"/>
<dbReference type="GO" id="GO:0005737">
    <property type="term" value="C:cytoplasm"/>
    <property type="evidence" value="ECO:0007669"/>
    <property type="project" value="UniProtKB-KW"/>
</dbReference>
<dbReference type="GO" id="GO:0005874">
    <property type="term" value="C:microtubule"/>
    <property type="evidence" value="ECO:0007669"/>
    <property type="project" value="UniProtKB-KW"/>
</dbReference>
<dbReference type="GO" id="GO:0072686">
    <property type="term" value="C:mitotic spindle"/>
    <property type="evidence" value="ECO:0007669"/>
    <property type="project" value="TreeGrafter"/>
</dbReference>
<dbReference type="GO" id="GO:0008017">
    <property type="term" value="F:microtubule binding"/>
    <property type="evidence" value="ECO:0007669"/>
    <property type="project" value="TreeGrafter"/>
</dbReference>
<dbReference type="GO" id="GO:0000226">
    <property type="term" value="P:microtubule cytoskeleton organization"/>
    <property type="evidence" value="ECO:0007669"/>
    <property type="project" value="TreeGrafter"/>
</dbReference>
<dbReference type="FunFam" id="2.130.10.10:FF:002876">
    <property type="entry name" value="77 kDa echinoderm microtubule-associated protein"/>
    <property type="match status" value="1"/>
</dbReference>
<dbReference type="FunFam" id="2.130.10.10:FF:002220">
    <property type="entry name" value="EMAP-like 3"/>
    <property type="match status" value="1"/>
</dbReference>
<dbReference type="FunFam" id="2.130.10.10:FF:000005">
    <property type="entry name" value="Putative echinoderm microtubule-associated protein-like 1"/>
    <property type="match status" value="1"/>
</dbReference>
<dbReference type="Gene3D" id="2.130.10.10">
    <property type="entry name" value="YVTN repeat-like/Quinoprotein amine dehydrogenase"/>
    <property type="match status" value="2"/>
</dbReference>
<dbReference type="InterPro" id="IPR055442">
    <property type="entry name" value="Beta-prop_EML-like_2nd"/>
</dbReference>
<dbReference type="InterPro" id="IPR055439">
    <property type="entry name" value="Beta-prop_EML_1st"/>
</dbReference>
<dbReference type="InterPro" id="IPR005108">
    <property type="entry name" value="HELP"/>
</dbReference>
<dbReference type="InterPro" id="IPR011044">
    <property type="entry name" value="Quino_amine_DH_bsu"/>
</dbReference>
<dbReference type="InterPro" id="IPR011047">
    <property type="entry name" value="Quinoprotein_ADH-like_sf"/>
</dbReference>
<dbReference type="InterPro" id="IPR015943">
    <property type="entry name" value="WD40/YVTN_repeat-like_dom_sf"/>
</dbReference>
<dbReference type="InterPro" id="IPR001680">
    <property type="entry name" value="WD40_rpt"/>
</dbReference>
<dbReference type="InterPro" id="IPR050630">
    <property type="entry name" value="WD_repeat_EMAP"/>
</dbReference>
<dbReference type="PANTHER" id="PTHR13720:SF50">
    <property type="entry name" value="ECHINODERM MICROTUBULE-ASSOCIATED PROTEIN-LIKE 2"/>
    <property type="match status" value="1"/>
</dbReference>
<dbReference type="PANTHER" id="PTHR13720">
    <property type="entry name" value="WD-40 REPEAT PROTEIN"/>
    <property type="match status" value="1"/>
</dbReference>
<dbReference type="Pfam" id="PF23409">
    <property type="entry name" value="Beta-prop_EML"/>
    <property type="match status" value="1"/>
</dbReference>
<dbReference type="Pfam" id="PF23414">
    <property type="entry name" value="Beta-prop_EML_2"/>
    <property type="match status" value="1"/>
</dbReference>
<dbReference type="Pfam" id="PF03451">
    <property type="entry name" value="HELP"/>
    <property type="match status" value="1"/>
</dbReference>
<dbReference type="SMART" id="SM00320">
    <property type="entry name" value="WD40"/>
    <property type="match status" value="8"/>
</dbReference>
<dbReference type="SUPFAM" id="SSF50998">
    <property type="entry name" value="Quinoprotein alcohol dehydrogenase-like"/>
    <property type="match status" value="1"/>
</dbReference>
<dbReference type="SUPFAM" id="SSF50969">
    <property type="entry name" value="YVTN repeat-like/Quinoprotein amine dehydrogenase"/>
    <property type="match status" value="1"/>
</dbReference>
<dbReference type="PROSITE" id="PS50082">
    <property type="entry name" value="WD_REPEATS_2"/>
    <property type="match status" value="4"/>
</dbReference>
<dbReference type="PROSITE" id="PS50294">
    <property type="entry name" value="WD_REPEATS_REGION"/>
    <property type="match status" value="1"/>
</dbReference>
<comment type="function">
    <text>May modify the assembly dynamics of microtubules, such that microtubules are slightly longer, but more dynamic.</text>
</comment>
<comment type="subcellular location">
    <subcellularLocation>
        <location evidence="2">Cytoplasm</location>
        <location evidence="2">Cytoskeleton</location>
    </subcellularLocation>
</comment>
<comment type="similarity">
    <text evidence="2">Belongs to the WD repeat EMAP family.</text>
</comment>
<name>EMAP_LYTVA</name>
<organism>
    <name type="scientific">Lytechinus variegatus</name>
    <name type="common">Green sea urchin</name>
    <name type="synonym">Echinus variegatus</name>
    <dbReference type="NCBI Taxonomy" id="7654"/>
    <lineage>
        <taxon>Eukaryota</taxon>
        <taxon>Metazoa</taxon>
        <taxon>Echinodermata</taxon>
        <taxon>Eleutherozoa</taxon>
        <taxon>Echinozoa</taxon>
        <taxon>Echinoidea</taxon>
        <taxon>Euechinoidea</taxon>
        <taxon>Echinacea</taxon>
        <taxon>Temnopleuroida</taxon>
        <taxon>Toxopneustidae</taxon>
        <taxon>Lytechinus</taxon>
    </lineage>
</organism>